<keyword id="KW-0378">Hydrolase</keyword>
<keyword id="KW-0662">Pyridine nucleotide biosynthesis</keyword>
<keyword id="KW-0663">Pyridoxal phosphate</keyword>
<keyword id="KW-1185">Reference proteome</keyword>
<name>KYNU_XANOR</name>
<sequence>MTDLLSRAHADALDAADPLRSLRDAFVFPQHGDRDQTYLVGNSLGLQPRAARAMVDEVLDQWGTLGVEGHFTGPTQWLTYHQLVRDALARVVGAQPGEVVAMNTLSVNLHLMMASFYRPTHERGAILIEAGAFPSDRHAVESQLRLRGLDPATHLIEVEADEPNGTLSMAAIADAIAQHGPRLALVLWPGIQYRTGQAFDLAEIVRLARAQGAAVGCDLAHAVGNIPLTLHDDGVDFAVWCNYKYLNAGPGAVGGCFVHERHANSDLPRIAGWWGHEQQTRFRMDPQFVPSPGAEGWQLSNPPVLALAPLRASLTLFDQAGMAALRAKSERLTGHLEQLIRARVPQVLQIVTPAEPMHRGCQLSLRVAGGRAQGRSLFEHLHAAGVLGDWREPDVIRIAPVPLYNRFSDLHTFVGQVEAWAAA</sequence>
<reference key="1">
    <citation type="journal article" date="2005" name="Nucleic Acids Res.">
        <title>The genome sequence of Xanthomonas oryzae pathovar oryzae KACC10331, the bacterial blight pathogen of rice.</title>
        <authorList>
            <person name="Lee B.-M."/>
            <person name="Park Y.-J."/>
            <person name="Park D.-S."/>
            <person name="Kang H.-W."/>
            <person name="Kim J.-G."/>
            <person name="Song E.-S."/>
            <person name="Park I.-C."/>
            <person name="Yoon U.-H."/>
            <person name="Hahn J.-H."/>
            <person name="Koo B.-S."/>
            <person name="Lee G.-B."/>
            <person name="Kim H."/>
            <person name="Park H.-S."/>
            <person name="Yoon K.-O."/>
            <person name="Kim J.-H."/>
            <person name="Jung C.-H."/>
            <person name="Koh N.-H."/>
            <person name="Seo J.-S."/>
            <person name="Go S.-J."/>
        </authorList>
    </citation>
    <scope>NUCLEOTIDE SEQUENCE [LARGE SCALE GENOMIC DNA]</scope>
    <source>
        <strain>KACC10331 / KXO85</strain>
    </source>
</reference>
<comment type="function">
    <text evidence="1">Catalyzes the cleavage of L-kynurenine (L-Kyn) and L-3-hydroxykynurenine (L-3OHKyn) into anthranilic acid (AA) and 3-hydroxyanthranilic acid (3-OHAA), respectively.</text>
</comment>
<comment type="catalytic activity">
    <reaction evidence="1">
        <text>L-kynurenine + H2O = anthranilate + L-alanine + H(+)</text>
        <dbReference type="Rhea" id="RHEA:16813"/>
        <dbReference type="ChEBI" id="CHEBI:15377"/>
        <dbReference type="ChEBI" id="CHEBI:15378"/>
        <dbReference type="ChEBI" id="CHEBI:16567"/>
        <dbReference type="ChEBI" id="CHEBI:57959"/>
        <dbReference type="ChEBI" id="CHEBI:57972"/>
        <dbReference type="EC" id="3.7.1.3"/>
    </reaction>
</comment>
<comment type="catalytic activity">
    <reaction evidence="1">
        <text>3-hydroxy-L-kynurenine + H2O = 3-hydroxyanthranilate + L-alanine + H(+)</text>
        <dbReference type="Rhea" id="RHEA:25143"/>
        <dbReference type="ChEBI" id="CHEBI:15377"/>
        <dbReference type="ChEBI" id="CHEBI:15378"/>
        <dbReference type="ChEBI" id="CHEBI:36559"/>
        <dbReference type="ChEBI" id="CHEBI:57972"/>
        <dbReference type="ChEBI" id="CHEBI:58125"/>
        <dbReference type="EC" id="3.7.1.3"/>
    </reaction>
</comment>
<comment type="cofactor">
    <cofactor evidence="1">
        <name>pyridoxal 5'-phosphate</name>
        <dbReference type="ChEBI" id="CHEBI:597326"/>
    </cofactor>
</comment>
<comment type="pathway">
    <text evidence="1">Amino-acid degradation; L-kynurenine degradation; L-alanine and anthranilate from L-kynurenine: step 1/1.</text>
</comment>
<comment type="pathway">
    <text evidence="1">Cofactor biosynthesis; NAD(+) biosynthesis; quinolinate from L-kynurenine: step 2/3.</text>
</comment>
<comment type="subunit">
    <text evidence="1">Homodimer.</text>
</comment>
<comment type="similarity">
    <text evidence="1">Belongs to the kynureninase family.</text>
</comment>
<accession>Q5H039</accession>
<protein>
    <recommendedName>
        <fullName evidence="1">Kynureninase</fullName>
        <ecNumber evidence="1">3.7.1.3</ecNumber>
    </recommendedName>
    <alternativeName>
        <fullName evidence="1">L-kynurenine hydrolase</fullName>
    </alternativeName>
</protein>
<feature type="chain" id="PRO_0000357021" description="Kynureninase">
    <location>
        <begin position="1"/>
        <end position="423"/>
    </location>
</feature>
<feature type="binding site" evidence="1">
    <location>
        <position position="105"/>
    </location>
    <ligand>
        <name>pyridoxal 5'-phosphate</name>
        <dbReference type="ChEBI" id="CHEBI:597326"/>
    </ligand>
</feature>
<feature type="binding site" evidence="1">
    <location>
        <position position="106"/>
    </location>
    <ligand>
        <name>pyridoxal 5'-phosphate</name>
        <dbReference type="ChEBI" id="CHEBI:597326"/>
    </ligand>
</feature>
<feature type="binding site" evidence="1">
    <location>
        <begin position="133"/>
        <end position="136"/>
    </location>
    <ligand>
        <name>pyridoxal 5'-phosphate</name>
        <dbReference type="ChEBI" id="CHEBI:597326"/>
    </ligand>
</feature>
<feature type="binding site" evidence="1">
    <location>
        <position position="218"/>
    </location>
    <ligand>
        <name>pyridoxal 5'-phosphate</name>
        <dbReference type="ChEBI" id="CHEBI:597326"/>
    </ligand>
</feature>
<feature type="binding site" evidence="1">
    <location>
        <position position="221"/>
    </location>
    <ligand>
        <name>pyridoxal 5'-phosphate</name>
        <dbReference type="ChEBI" id="CHEBI:597326"/>
    </ligand>
</feature>
<feature type="binding site" evidence="1">
    <location>
        <position position="243"/>
    </location>
    <ligand>
        <name>pyridoxal 5'-phosphate</name>
        <dbReference type="ChEBI" id="CHEBI:597326"/>
    </ligand>
</feature>
<feature type="binding site" evidence="1">
    <location>
        <position position="273"/>
    </location>
    <ligand>
        <name>pyridoxal 5'-phosphate</name>
        <dbReference type="ChEBI" id="CHEBI:597326"/>
    </ligand>
</feature>
<feature type="binding site" evidence="1">
    <location>
        <position position="301"/>
    </location>
    <ligand>
        <name>pyridoxal 5'-phosphate</name>
        <dbReference type="ChEBI" id="CHEBI:597326"/>
    </ligand>
</feature>
<feature type="modified residue" description="N6-(pyridoxal phosphate)lysine" evidence="1">
    <location>
        <position position="244"/>
    </location>
</feature>
<gene>
    <name evidence="1" type="primary">kynU</name>
    <name type="ordered locus">XOO2428</name>
</gene>
<proteinExistence type="inferred from homology"/>
<evidence type="ECO:0000255" key="1">
    <source>
        <dbReference type="HAMAP-Rule" id="MF_01970"/>
    </source>
</evidence>
<organism>
    <name type="scientific">Xanthomonas oryzae pv. oryzae (strain KACC10331 / KXO85)</name>
    <dbReference type="NCBI Taxonomy" id="291331"/>
    <lineage>
        <taxon>Bacteria</taxon>
        <taxon>Pseudomonadati</taxon>
        <taxon>Pseudomonadota</taxon>
        <taxon>Gammaproteobacteria</taxon>
        <taxon>Lysobacterales</taxon>
        <taxon>Lysobacteraceae</taxon>
        <taxon>Xanthomonas</taxon>
    </lineage>
</organism>
<dbReference type="EC" id="3.7.1.3" evidence="1"/>
<dbReference type="EMBL" id="AE013598">
    <property type="protein sequence ID" value="AAW75682.1"/>
    <property type="molecule type" value="Genomic_DNA"/>
</dbReference>
<dbReference type="SMR" id="Q5H039"/>
<dbReference type="STRING" id="291331.XOO2428"/>
<dbReference type="KEGG" id="xoo:XOO2428"/>
<dbReference type="HOGENOM" id="CLU_003433_4_0_6"/>
<dbReference type="UniPathway" id="UPA00253">
    <property type="reaction ID" value="UER00329"/>
</dbReference>
<dbReference type="UniPathway" id="UPA00334">
    <property type="reaction ID" value="UER00455"/>
</dbReference>
<dbReference type="Proteomes" id="UP000006735">
    <property type="component" value="Chromosome"/>
</dbReference>
<dbReference type="GO" id="GO:0005737">
    <property type="term" value="C:cytoplasm"/>
    <property type="evidence" value="ECO:0007669"/>
    <property type="project" value="InterPro"/>
</dbReference>
<dbReference type="GO" id="GO:0030429">
    <property type="term" value="F:kynureninase activity"/>
    <property type="evidence" value="ECO:0007669"/>
    <property type="project" value="UniProtKB-UniRule"/>
</dbReference>
<dbReference type="GO" id="GO:0030170">
    <property type="term" value="F:pyridoxal phosphate binding"/>
    <property type="evidence" value="ECO:0007669"/>
    <property type="project" value="UniProtKB-UniRule"/>
</dbReference>
<dbReference type="GO" id="GO:0043420">
    <property type="term" value="P:anthranilate metabolic process"/>
    <property type="evidence" value="ECO:0007669"/>
    <property type="project" value="TreeGrafter"/>
</dbReference>
<dbReference type="GO" id="GO:0097053">
    <property type="term" value="P:L-kynurenine catabolic process"/>
    <property type="evidence" value="ECO:0007669"/>
    <property type="project" value="UniProtKB-UniRule"/>
</dbReference>
<dbReference type="GO" id="GO:0019441">
    <property type="term" value="P:L-tryptophan catabolic process to kynurenine"/>
    <property type="evidence" value="ECO:0007669"/>
    <property type="project" value="TreeGrafter"/>
</dbReference>
<dbReference type="GO" id="GO:0009435">
    <property type="term" value="P:NAD biosynthetic process"/>
    <property type="evidence" value="ECO:0007669"/>
    <property type="project" value="UniProtKB-UniPathway"/>
</dbReference>
<dbReference type="GO" id="GO:0019805">
    <property type="term" value="P:quinolinate biosynthetic process"/>
    <property type="evidence" value="ECO:0007669"/>
    <property type="project" value="UniProtKB-UniRule"/>
</dbReference>
<dbReference type="FunFam" id="3.40.640.10:FF:000031">
    <property type="entry name" value="Kynureninase"/>
    <property type="match status" value="1"/>
</dbReference>
<dbReference type="Gene3D" id="3.90.1150.10">
    <property type="entry name" value="Aspartate Aminotransferase, domain 1"/>
    <property type="match status" value="1"/>
</dbReference>
<dbReference type="Gene3D" id="3.40.640.10">
    <property type="entry name" value="Type I PLP-dependent aspartate aminotransferase-like (Major domain)"/>
    <property type="match status" value="1"/>
</dbReference>
<dbReference type="HAMAP" id="MF_01970">
    <property type="entry name" value="Kynureninase"/>
    <property type="match status" value="1"/>
</dbReference>
<dbReference type="InterPro" id="IPR010111">
    <property type="entry name" value="Kynureninase"/>
</dbReference>
<dbReference type="InterPro" id="IPR015424">
    <property type="entry name" value="PyrdxlP-dep_Trfase"/>
</dbReference>
<dbReference type="InterPro" id="IPR015421">
    <property type="entry name" value="PyrdxlP-dep_Trfase_major"/>
</dbReference>
<dbReference type="InterPro" id="IPR015422">
    <property type="entry name" value="PyrdxlP-dep_Trfase_small"/>
</dbReference>
<dbReference type="NCBIfam" id="TIGR01814">
    <property type="entry name" value="kynureninase"/>
    <property type="match status" value="1"/>
</dbReference>
<dbReference type="PANTHER" id="PTHR14084">
    <property type="entry name" value="KYNURENINASE"/>
    <property type="match status" value="1"/>
</dbReference>
<dbReference type="PANTHER" id="PTHR14084:SF0">
    <property type="entry name" value="KYNURENINASE"/>
    <property type="match status" value="1"/>
</dbReference>
<dbReference type="Pfam" id="PF22580">
    <property type="entry name" value="KYNU_C"/>
    <property type="match status" value="1"/>
</dbReference>
<dbReference type="PIRSF" id="PIRSF038800">
    <property type="entry name" value="KYNU"/>
    <property type="match status" value="1"/>
</dbReference>
<dbReference type="SUPFAM" id="SSF53383">
    <property type="entry name" value="PLP-dependent transferases"/>
    <property type="match status" value="1"/>
</dbReference>